<accession>P85526</accession>
<evidence type="ECO:0000250" key="1">
    <source>
        <dbReference type="UniProtKB" id="P56871"/>
    </source>
</evidence>
<evidence type="ECO:0000255" key="2">
    <source>
        <dbReference type="PROSITE-ProRule" id="PRU00395"/>
    </source>
</evidence>
<evidence type="ECO:0000269" key="3">
    <source>
    </source>
</evidence>
<evidence type="ECO:0000305" key="4"/>
<dbReference type="BMRB" id="P85526"/>
<dbReference type="SMR" id="P85526"/>
<dbReference type="GO" id="GO:0006952">
    <property type="term" value="P:defense response"/>
    <property type="evidence" value="ECO:0007669"/>
    <property type="project" value="UniProtKB-KW"/>
</dbReference>
<dbReference type="InterPro" id="IPR005535">
    <property type="entry name" value="Cyclotide"/>
</dbReference>
<dbReference type="InterPro" id="IPR012323">
    <property type="entry name" value="Cyclotide_bracelet_CS"/>
</dbReference>
<dbReference type="InterPro" id="IPR036146">
    <property type="entry name" value="Cyclotide_sf"/>
</dbReference>
<dbReference type="Pfam" id="PF03784">
    <property type="entry name" value="Cyclotide"/>
    <property type="match status" value="1"/>
</dbReference>
<dbReference type="PIRSF" id="PIRSF037891">
    <property type="entry name" value="Cycloviolacin"/>
    <property type="match status" value="1"/>
</dbReference>
<dbReference type="SUPFAM" id="SSF57038">
    <property type="entry name" value="Cyclotides"/>
    <property type="match status" value="1"/>
</dbReference>
<dbReference type="PROSITE" id="PS51052">
    <property type="entry name" value="CYCLOTIDE"/>
    <property type="match status" value="1"/>
</dbReference>
<dbReference type="PROSITE" id="PS60008">
    <property type="entry name" value="CYCLOTIDE_BRACELET"/>
    <property type="match status" value="1"/>
</dbReference>
<organism>
    <name type="scientific">Viola biflora</name>
    <name type="common">Yellow wood violet</name>
    <dbReference type="NCBI Taxonomy" id="214529"/>
    <lineage>
        <taxon>Eukaryota</taxon>
        <taxon>Viridiplantae</taxon>
        <taxon>Streptophyta</taxon>
        <taxon>Embryophyta</taxon>
        <taxon>Tracheophyta</taxon>
        <taxon>Spermatophyta</taxon>
        <taxon>Magnoliopsida</taxon>
        <taxon>eudicotyledons</taxon>
        <taxon>Gunneridae</taxon>
        <taxon>Pentapetalae</taxon>
        <taxon>rosids</taxon>
        <taxon>fabids</taxon>
        <taxon>Malpighiales</taxon>
        <taxon>Violaceae</taxon>
        <taxon>Viola</taxon>
        <taxon>Viola subgen. Viola</taxon>
        <taxon>Viola sect. Chamaemelanium</taxon>
    </lineage>
</organism>
<sequence>GIPCGESCVWIPCISSAIGCSCKSKVCYRN</sequence>
<reference evidence="4" key="1">
    <citation type="journal article" date="2008" name="Phytochemistry">
        <title>The alpine violet, Viola biflora, is a rich source of cyclotides with potent cytotoxicity.</title>
        <authorList>
            <person name="Herrmann A."/>
            <person name="Burman R."/>
            <person name="Mylne J.S."/>
            <person name="Karlsson G."/>
            <person name="Gullbo J."/>
            <person name="Craik D.J."/>
            <person name="Clark R.J."/>
            <person name="Goeransson U."/>
        </authorList>
    </citation>
    <scope>PROTEIN SEQUENCE</scope>
    <scope>MASS SPECTROMETRY</scope>
</reference>
<feature type="peptide" id="PRO_0000341441" description="Cycloviolacin-O2" evidence="2 3">
    <location>
        <begin position="1"/>
        <end position="30"/>
    </location>
</feature>
<feature type="disulfide bond" evidence="1 2">
    <location>
        <begin position="4"/>
        <end position="20"/>
    </location>
</feature>
<feature type="disulfide bond" evidence="1 2">
    <location>
        <begin position="8"/>
        <end position="22"/>
    </location>
</feature>
<feature type="disulfide bond" evidence="1 2">
    <location>
        <begin position="13"/>
        <end position="27"/>
    </location>
</feature>
<feature type="cross-link" description="Cyclopeptide (Gly-Asn)" evidence="3">
    <location>
        <begin position="1"/>
        <end position="30"/>
    </location>
</feature>
<protein>
    <recommendedName>
        <fullName>Cycloviolacin-O2</fullName>
    </recommendedName>
</protein>
<keyword id="KW-0903">Direct protein sequencing</keyword>
<keyword id="KW-1015">Disulfide bond</keyword>
<keyword id="KW-0960">Knottin</keyword>
<keyword id="KW-0611">Plant defense</keyword>
<proteinExistence type="evidence at protein level"/>
<comment type="function">
    <text evidence="4">Probably participates in a plant defense mechanism.</text>
</comment>
<comment type="domain">
    <text evidence="1">The presence of a 'disulfide through disulfide knot' structurally defines this protein as a knottin.</text>
</comment>
<comment type="PTM">
    <text evidence="2 3">This is a cyclic peptide.</text>
</comment>
<comment type="mass spectrometry"/>
<comment type="similarity">
    <text evidence="2">Belongs to the cyclotide family. Moebius subfamily.</text>
</comment>
<comment type="caution">
    <text evidence="4">This peptide is cyclic. The start position was chosen by similarity to OAK1 (kalata-B1) for which the DNA sequence is known.</text>
</comment>
<name>CYO2_VIOBI</name>